<evidence type="ECO:0000250" key="1">
    <source>
        <dbReference type="UniProtKB" id="P10856"/>
    </source>
</evidence>
<evidence type="ECO:0000250" key="2">
    <source>
        <dbReference type="UniProtKB" id="P22613"/>
    </source>
</evidence>
<evidence type="ECO:0000256" key="3">
    <source>
        <dbReference type="SAM" id="MobiDB-lite"/>
    </source>
</evidence>
<evidence type="ECO:0000269" key="4">
    <source>
    </source>
</evidence>
<evidence type="ECO:0000305" key="5"/>
<reference key="1">
    <citation type="journal article" date="1987" name="Gene">
        <title>Isolation of a cDNA clone for transition protein 1 (TP1), a major chromosomal protein of mammalian spermatids.</title>
        <authorList>
            <person name="Heidaran M.A."/>
            <person name="Kistler W.S."/>
        </authorList>
    </citation>
    <scope>NUCLEOTIDE SEQUENCE [MRNA]</scope>
    <source>
        <strain>Sprague-Dawley</strain>
        <tissue>Liver</tissue>
    </source>
</reference>
<reference key="2">
    <citation type="journal article" date="1989" name="Gene">
        <title>Nucleotide sequence of the Stp-1 gene coding for rat spermatid nuclear transition protein 1 (TP1): homology with protamine P1 and assignment of the mouse Stp-1 gene to chromosome 1.</title>
        <authorList>
            <person name="Heidaran M.A."/>
            <person name="Kozak C.A."/>
            <person name="Kistler W.S."/>
        </authorList>
    </citation>
    <scope>NUCLEOTIDE SEQUENCE [GENOMIC DNA]</scope>
    <source>
        <strain>Sprague-Dawley</strain>
        <tissue>Liver</tissue>
    </source>
</reference>
<reference key="3">
    <citation type="journal article" date="2004" name="Genome Res.">
        <title>The status, quality, and expansion of the NIH full-length cDNA project: the Mammalian Gene Collection (MGC).</title>
        <authorList>
            <consortium name="The MGC Project Team"/>
        </authorList>
    </citation>
    <scope>NUCLEOTIDE SEQUENCE [LARGE SCALE MRNA]</scope>
    <source>
        <tissue>Testis</tissue>
    </source>
</reference>
<reference key="4">
    <citation type="journal article" date="1975" name="J. Biol. Chem.">
        <title>The amino acid sequence of a testis-specific basic protein that is associated with spermatogenesis.</title>
        <authorList>
            <person name="Kistler W.S."/>
            <person name="Noyes C."/>
            <person name="Hsu R."/>
            <person name="Heinrikson R.L."/>
        </authorList>
    </citation>
    <scope>PROTEIN SEQUENCE OF 13-55</scope>
    <source>
        <tissue>Testis</tissue>
    </source>
</reference>
<reference key="5">
    <citation type="journal article" date="1974" name="Biochem. Biophys. Res. Commun.">
        <title>Partial structural analysis of a highly basic low molecular weight protein from rat testis.</title>
        <authorList>
            <person name="Kistler W.S."/>
            <person name="Noyes C."/>
            <person name="Heinrikson R.L."/>
        </authorList>
    </citation>
    <scope>PROTEIN SEQUENCE OF 2-24</scope>
    <source>
        <tissue>Testis</tissue>
    </source>
</reference>
<keyword id="KW-0158">Chromosome</keyword>
<keyword id="KW-0217">Developmental protein</keyword>
<keyword id="KW-0221">Differentiation</keyword>
<keyword id="KW-0903">Direct protein sequencing</keyword>
<keyword id="KW-0238">DNA-binding</keyword>
<keyword id="KW-0544">Nucleosome core</keyword>
<keyword id="KW-0539">Nucleus</keyword>
<keyword id="KW-0597">Phosphoprotein</keyword>
<keyword id="KW-1185">Reference proteome</keyword>
<keyword id="KW-0744">Spermatogenesis</keyword>
<organism>
    <name type="scientific">Rattus norvegicus</name>
    <name type="common">Rat</name>
    <dbReference type="NCBI Taxonomy" id="10116"/>
    <lineage>
        <taxon>Eukaryota</taxon>
        <taxon>Metazoa</taxon>
        <taxon>Chordata</taxon>
        <taxon>Craniata</taxon>
        <taxon>Vertebrata</taxon>
        <taxon>Euteleostomi</taxon>
        <taxon>Mammalia</taxon>
        <taxon>Eutheria</taxon>
        <taxon>Euarchontoglires</taxon>
        <taxon>Glires</taxon>
        <taxon>Rodentia</taxon>
        <taxon>Myomorpha</taxon>
        <taxon>Muroidea</taxon>
        <taxon>Muridae</taxon>
        <taxon>Murinae</taxon>
        <taxon>Rattus</taxon>
    </lineage>
</organism>
<accession>P02317</accession>
<feature type="initiator methionine" description="Removed" evidence="4">
    <location>
        <position position="1"/>
    </location>
</feature>
<feature type="chain" id="PRO_0000191420" description="Spermatid nuclear transition protein 1">
    <location>
        <begin position="2"/>
        <end position="55"/>
    </location>
</feature>
<feature type="region of interest" description="Disordered" evidence="3">
    <location>
        <begin position="1"/>
        <end position="55"/>
    </location>
</feature>
<feature type="compositionally biased region" description="Basic residues" evidence="3">
    <location>
        <begin position="1"/>
        <end position="42"/>
    </location>
</feature>
<feature type="modified residue" description="Phosphoserine" evidence="2">
    <location>
        <position position="36"/>
    </location>
</feature>
<feature type="modified residue" description="Phosphoserine" evidence="2">
    <location>
        <position position="37"/>
    </location>
</feature>
<feature type="modified residue" description="Phosphoserine" evidence="2">
    <location>
        <position position="40"/>
    </location>
</feature>
<feature type="sequence conflict" description="In Ref. 4; AA sequence." evidence="5" ref="4">
    <original>DAS</original>
    <variation>SAD</variation>
    <location>
        <begin position="46"/>
        <end position="48"/>
    </location>
</feature>
<gene>
    <name type="primary">Tnp1</name>
</gene>
<dbReference type="EMBL" id="X07284">
    <property type="protein sequence ID" value="CAA30264.1"/>
    <property type="molecule type" value="Genomic_DNA"/>
</dbReference>
<dbReference type="EMBL" id="M17096">
    <property type="protein sequence ID" value="AAA42260.1"/>
    <property type="molecule type" value="mRNA"/>
</dbReference>
<dbReference type="EMBL" id="BC078850">
    <property type="protein sequence ID" value="AAH78850.1"/>
    <property type="molecule type" value="mRNA"/>
</dbReference>
<dbReference type="PIR" id="A29095">
    <property type="entry name" value="BGRT"/>
</dbReference>
<dbReference type="RefSeq" id="NP_058752.1">
    <property type="nucleotide sequence ID" value="NM_017056.2"/>
</dbReference>
<dbReference type="FunCoup" id="P02317">
    <property type="interactions" value="2"/>
</dbReference>
<dbReference type="STRING" id="10116.ENSRNOP00000023769"/>
<dbReference type="iPTMnet" id="P02317"/>
<dbReference type="PhosphoSitePlus" id="P02317"/>
<dbReference type="PaxDb" id="10116-ENSRNOP00000023769"/>
<dbReference type="GeneID" id="24839"/>
<dbReference type="KEGG" id="rno:24839"/>
<dbReference type="UCSC" id="RGD:3884">
    <property type="organism name" value="rat"/>
</dbReference>
<dbReference type="AGR" id="RGD:3884"/>
<dbReference type="CTD" id="7141"/>
<dbReference type="RGD" id="3884">
    <property type="gene designation" value="Tnp1"/>
</dbReference>
<dbReference type="VEuPathDB" id="HostDB:ENSRNOG00000017611"/>
<dbReference type="eggNOG" id="ENOG502TKT1">
    <property type="taxonomic scope" value="Eukaryota"/>
</dbReference>
<dbReference type="HOGENOM" id="CLU_3019482_0_0_1"/>
<dbReference type="InParanoid" id="P02317"/>
<dbReference type="PhylomeDB" id="P02317"/>
<dbReference type="TreeFam" id="TF338391"/>
<dbReference type="PRO" id="PR:P02317"/>
<dbReference type="Proteomes" id="UP000002494">
    <property type="component" value="Chromosome 9"/>
</dbReference>
<dbReference type="Bgee" id="ENSRNOG00000017611">
    <property type="expression patterns" value="Expressed in testis and 8 other cell types or tissues"/>
</dbReference>
<dbReference type="GO" id="GO:0001673">
    <property type="term" value="C:male germ cell nucleus"/>
    <property type="evidence" value="ECO:0000314"/>
    <property type="project" value="RGD"/>
</dbReference>
<dbReference type="GO" id="GO:0000786">
    <property type="term" value="C:nucleosome"/>
    <property type="evidence" value="ECO:0000250"/>
    <property type="project" value="UniProtKB"/>
</dbReference>
<dbReference type="GO" id="GO:0005634">
    <property type="term" value="C:nucleus"/>
    <property type="evidence" value="ECO:0000266"/>
    <property type="project" value="RGD"/>
</dbReference>
<dbReference type="GO" id="GO:0003677">
    <property type="term" value="F:DNA binding"/>
    <property type="evidence" value="ECO:0000250"/>
    <property type="project" value="UniProtKB"/>
</dbReference>
<dbReference type="GO" id="GO:0006338">
    <property type="term" value="P:chromatin remodeling"/>
    <property type="evidence" value="ECO:0000250"/>
    <property type="project" value="UniProtKB"/>
</dbReference>
<dbReference type="GO" id="GO:0030317">
    <property type="term" value="P:flagellated sperm motility"/>
    <property type="evidence" value="ECO:0000250"/>
    <property type="project" value="UniProtKB"/>
</dbReference>
<dbReference type="GO" id="GO:0031507">
    <property type="term" value="P:heterochromatin formation"/>
    <property type="evidence" value="ECO:0000250"/>
    <property type="project" value="UniProtKB"/>
</dbReference>
<dbReference type="GO" id="GO:0045892">
    <property type="term" value="P:negative regulation of DNA-templated transcription"/>
    <property type="evidence" value="ECO:0000250"/>
    <property type="project" value="UniProtKB"/>
</dbReference>
<dbReference type="GO" id="GO:0006337">
    <property type="term" value="P:nucleosome disassembly"/>
    <property type="evidence" value="ECO:0000250"/>
    <property type="project" value="UniProtKB"/>
</dbReference>
<dbReference type="GO" id="GO:0010954">
    <property type="term" value="P:positive regulation of protein processing"/>
    <property type="evidence" value="ECO:0000250"/>
    <property type="project" value="UniProtKB"/>
</dbReference>
<dbReference type="GO" id="GO:0019953">
    <property type="term" value="P:sexual reproduction"/>
    <property type="evidence" value="ECO:0000250"/>
    <property type="project" value="UniProtKB"/>
</dbReference>
<dbReference type="GO" id="GO:0000012">
    <property type="term" value="P:single strand break repair"/>
    <property type="evidence" value="ECO:0000250"/>
    <property type="project" value="UniProtKB"/>
</dbReference>
<dbReference type="GO" id="GO:0035092">
    <property type="term" value="P:sperm DNA condensation"/>
    <property type="evidence" value="ECO:0000250"/>
    <property type="project" value="UniProtKB"/>
</dbReference>
<dbReference type="GO" id="GO:0007286">
    <property type="term" value="P:spermatid development"/>
    <property type="evidence" value="ECO:0000250"/>
    <property type="project" value="UniProtKB"/>
</dbReference>
<dbReference type="GO" id="GO:0007290">
    <property type="term" value="P:spermatid nucleus elongation"/>
    <property type="evidence" value="ECO:0000250"/>
    <property type="project" value="UniProtKB"/>
</dbReference>
<dbReference type="GO" id="GO:0007283">
    <property type="term" value="P:spermatogenesis"/>
    <property type="evidence" value="ECO:0000266"/>
    <property type="project" value="RGD"/>
</dbReference>
<dbReference type="InterPro" id="IPR001319">
    <property type="entry name" value="Nuclear_transition_prot1"/>
</dbReference>
<dbReference type="InterPro" id="IPR020062">
    <property type="entry name" value="Nuclear_transition_prot1_CS"/>
</dbReference>
<dbReference type="PANTHER" id="PTHR17486">
    <property type="entry name" value="SPERMATID NUCLEAR TRANSITION PROTEIN 1"/>
    <property type="match status" value="1"/>
</dbReference>
<dbReference type="PANTHER" id="PTHR17486:SF0">
    <property type="entry name" value="SPERMATID NUCLEAR TRANSITION PROTEIN 1"/>
    <property type="match status" value="1"/>
</dbReference>
<dbReference type="Pfam" id="PF02079">
    <property type="entry name" value="TP1"/>
    <property type="match status" value="1"/>
</dbReference>
<dbReference type="PROSITE" id="PS00541">
    <property type="entry name" value="TP1"/>
    <property type="match status" value="1"/>
</dbReference>
<name>STP1_RAT</name>
<protein>
    <recommendedName>
        <fullName>Spermatid nuclear transition protein 1</fullName>
        <shortName>STP-1</shortName>
        <shortName>TP-1</shortName>
    </recommendedName>
    <alternativeName>
        <fullName>Testis-specific basic protein</fullName>
    </alternativeName>
</protein>
<sequence>MSTSRKLKTHGMRRGKNRAPHKGVKRGGSKRKYRKSSLKSRKRGDDASRNYRSHL</sequence>
<comment type="function">
    <text evidence="1">Plays a key role in the replacement of histones to protamine in the elongating spermatids of mammals. In condensing spermatids, loaded onto the nucleosomes, where it promotes the recruitment and processing of protamines, which are responsible for histone eviction.</text>
</comment>
<comment type="subcellular location">
    <subcellularLocation>
        <location evidence="1">Nucleus</location>
    </subcellularLocation>
    <subcellularLocation>
        <location evidence="1">Chromosome</location>
    </subcellularLocation>
    <text evidence="1">Loaded onto the nucleosomes of condensing spermatids.</text>
</comment>
<comment type="tissue specificity">
    <text>Testis.</text>
</comment>
<comment type="similarity">
    <text evidence="5">Belongs to the nuclear transition protein 1 family.</text>
</comment>
<proteinExistence type="evidence at protein level"/>